<dbReference type="EMBL" id="AJ007699">
    <property type="protein sequence ID" value="CAA07605.1"/>
    <property type="molecule type" value="Genomic_DNA"/>
</dbReference>
<dbReference type="SMR" id="Q9Z427"/>
<dbReference type="eggNOG" id="COG1660">
    <property type="taxonomic scope" value="Bacteria"/>
</dbReference>
<dbReference type="GO" id="GO:0005524">
    <property type="term" value="F:ATP binding"/>
    <property type="evidence" value="ECO:0007669"/>
    <property type="project" value="UniProtKB-UniRule"/>
</dbReference>
<dbReference type="GO" id="GO:0005525">
    <property type="term" value="F:GTP binding"/>
    <property type="evidence" value="ECO:0007669"/>
    <property type="project" value="UniProtKB-UniRule"/>
</dbReference>
<dbReference type="Gene3D" id="3.40.50.300">
    <property type="entry name" value="P-loop containing nucleotide triphosphate hydrolases"/>
    <property type="match status" value="1"/>
</dbReference>
<dbReference type="HAMAP" id="MF_00636">
    <property type="entry name" value="RapZ_like"/>
    <property type="match status" value="1"/>
</dbReference>
<dbReference type="InterPro" id="IPR027417">
    <property type="entry name" value="P-loop_NTPase"/>
</dbReference>
<dbReference type="InterPro" id="IPR005337">
    <property type="entry name" value="RapZ-like"/>
</dbReference>
<dbReference type="InterPro" id="IPR053930">
    <property type="entry name" value="RapZ-like_N"/>
</dbReference>
<dbReference type="InterPro" id="IPR053931">
    <property type="entry name" value="RapZ_C"/>
</dbReference>
<dbReference type="NCBIfam" id="NF003828">
    <property type="entry name" value="PRK05416.1"/>
    <property type="match status" value="1"/>
</dbReference>
<dbReference type="PANTHER" id="PTHR30448">
    <property type="entry name" value="RNASE ADAPTER PROTEIN RAPZ"/>
    <property type="match status" value="1"/>
</dbReference>
<dbReference type="PANTHER" id="PTHR30448:SF0">
    <property type="entry name" value="RNASE ADAPTER PROTEIN RAPZ"/>
    <property type="match status" value="1"/>
</dbReference>
<dbReference type="Pfam" id="PF22740">
    <property type="entry name" value="PapZ_C"/>
    <property type="match status" value="1"/>
</dbReference>
<dbReference type="Pfam" id="PF03668">
    <property type="entry name" value="RapZ-like_N"/>
    <property type="match status" value="1"/>
</dbReference>
<dbReference type="PIRSF" id="PIRSF005052">
    <property type="entry name" value="P-loopkin"/>
    <property type="match status" value="1"/>
</dbReference>
<dbReference type="SUPFAM" id="SSF52540">
    <property type="entry name" value="P-loop containing nucleoside triphosphate hydrolases"/>
    <property type="match status" value="1"/>
</dbReference>
<protein>
    <recommendedName>
        <fullName evidence="1">Nucleotide-binding protein in ptsO 5'region</fullName>
    </recommendedName>
</protein>
<keyword id="KW-0067">ATP-binding</keyword>
<keyword id="KW-0342">GTP-binding</keyword>
<keyword id="KW-0547">Nucleotide-binding</keyword>
<evidence type="ECO:0000255" key="1">
    <source>
        <dbReference type="HAMAP-Rule" id="MF_00636"/>
    </source>
</evidence>
<organism>
    <name type="scientific">Pseudomonas putida</name>
    <name type="common">Arthrobacter siderocapsulatus</name>
    <dbReference type="NCBI Taxonomy" id="303"/>
    <lineage>
        <taxon>Bacteria</taxon>
        <taxon>Pseudomonadati</taxon>
        <taxon>Pseudomonadota</taxon>
        <taxon>Gammaproteobacteria</taxon>
        <taxon>Pseudomonadales</taxon>
        <taxon>Pseudomonadaceae</taxon>
        <taxon>Pseudomonas</taxon>
    </lineage>
</organism>
<sequence>MRLIIVSGRSGSGKSTALDVLEDSGFYCIDNLPAGVLPQLAENALINTELLQPKVAVSIDARNLPSHLMRFPELLEEARARHIQCDVLYLDADEEVLLKRFSETRRRHPLTNANRSLAEAIRVESDLLGPIADLADLKIDTTNLNLYQLRDSIKLRLLNQPEPGTAFLVESFGFKRGMPVDADLVFDVRCLPNPYWKPELREHSGLDQPVIDYLAAQPDVEDMYNDISSYLLKWLPRFAASNRAYVTIAIGCTGGHHRSVYITERLGRQLQQTLKNVQVRHRDL</sequence>
<comment type="function">
    <text evidence="1">Displays ATPase and GTPase activities.</text>
</comment>
<comment type="similarity">
    <text evidence="1">Belongs to the RapZ-like family.</text>
</comment>
<feature type="chain" id="PRO_0000107746" description="Nucleotide-binding protein in ptsO 5'region">
    <location>
        <begin position="1"/>
        <end position="284"/>
    </location>
</feature>
<feature type="binding site" evidence="1">
    <location>
        <begin position="8"/>
        <end position="15"/>
    </location>
    <ligand>
        <name>ATP</name>
        <dbReference type="ChEBI" id="CHEBI:30616"/>
    </ligand>
</feature>
<feature type="binding site" evidence="1">
    <location>
        <begin position="60"/>
        <end position="63"/>
    </location>
    <ligand>
        <name>GTP</name>
        <dbReference type="ChEBI" id="CHEBI:37565"/>
    </ligand>
</feature>
<accession>Q9Z427</accession>
<proteinExistence type="inferred from homology"/>
<reference key="1">
    <citation type="submission" date="1998-08" db="EMBL/GenBank/DDBJ databases">
        <authorList>
            <person name="Cases I."/>
        </authorList>
    </citation>
    <scope>NUCLEOTIDE SEQUENCE [GENOMIC DNA]</scope>
</reference>
<name>YPTO_PSEPU</name>